<accession>Q8IER7</accession>
<evidence type="ECO:0000250" key="1"/>
<evidence type="ECO:0000305" key="2"/>
<dbReference type="EMBL" id="AL844509">
    <property type="protein sequence ID" value="CAD52182.1"/>
    <property type="molecule type" value="Genomic_DNA"/>
</dbReference>
<dbReference type="RefSeq" id="XP_001349775.1">
    <property type="nucleotide sequence ID" value="XM_001349739.1"/>
</dbReference>
<dbReference type="SMR" id="Q8IER7"/>
<dbReference type="FunCoup" id="Q8IER7">
    <property type="interactions" value="188"/>
</dbReference>
<dbReference type="STRING" id="36329.Q8IER7"/>
<dbReference type="PaxDb" id="5833-PF13_0023"/>
<dbReference type="EnsemblProtists" id="CAD52182">
    <property type="protein sequence ID" value="CAD52182"/>
    <property type="gene ID" value="PF3D7_1304900"/>
</dbReference>
<dbReference type="KEGG" id="pfa:PF3D7_1304900"/>
<dbReference type="VEuPathDB" id="PlasmoDB:PF3D7_1304900"/>
<dbReference type="HOGENOM" id="CLU_090381_2_1_1"/>
<dbReference type="InParanoid" id="Q8IER7"/>
<dbReference type="OMA" id="MPHPLEN"/>
<dbReference type="OrthoDB" id="10248581at2759"/>
<dbReference type="PhylomeDB" id="Q8IER7"/>
<dbReference type="Reactome" id="R-PFA-113418">
    <property type="pathway name" value="Formation of the Early Elongation Complex"/>
</dbReference>
<dbReference type="Reactome" id="R-PFA-674695">
    <property type="pathway name" value="RNA Polymerase II Pre-transcription Events"/>
</dbReference>
<dbReference type="Reactome" id="R-PFA-6781823">
    <property type="pathway name" value="Formation of TC-NER Pre-Incision Complex"/>
</dbReference>
<dbReference type="Reactome" id="R-PFA-6782135">
    <property type="pathway name" value="Dual incision in TC-NER"/>
</dbReference>
<dbReference type="Reactome" id="R-PFA-6782210">
    <property type="pathway name" value="Gap-filling DNA repair synthesis and ligation in TC-NER"/>
</dbReference>
<dbReference type="Reactome" id="R-PFA-72086">
    <property type="pathway name" value="mRNA Capping"/>
</dbReference>
<dbReference type="Reactome" id="R-PFA-72163">
    <property type="pathway name" value="mRNA Splicing - Major Pathway"/>
</dbReference>
<dbReference type="Reactome" id="R-PFA-72203">
    <property type="pathway name" value="Processing of Capped Intron-Containing Pre-mRNA"/>
</dbReference>
<dbReference type="Reactome" id="R-PFA-73776">
    <property type="pathway name" value="RNA Polymerase II Promoter Escape"/>
</dbReference>
<dbReference type="Reactome" id="R-PFA-77075">
    <property type="pathway name" value="RNA Pol II CTD phosphorylation and interaction with CE"/>
</dbReference>
<dbReference type="Reactome" id="R-PFA-9018519">
    <property type="pathway name" value="Estrogen-dependent gene expression"/>
</dbReference>
<dbReference type="Proteomes" id="UP000001450">
    <property type="component" value="Chromosome 13"/>
</dbReference>
<dbReference type="GO" id="GO:0005665">
    <property type="term" value="C:RNA polymerase II, core complex"/>
    <property type="evidence" value="ECO:0000318"/>
    <property type="project" value="GO_Central"/>
</dbReference>
<dbReference type="GO" id="GO:0016591">
    <property type="term" value="C:RNA polymerase II, holoenzyme"/>
    <property type="evidence" value="ECO:0000250"/>
    <property type="project" value="GeneDB"/>
</dbReference>
<dbReference type="GO" id="GO:0003677">
    <property type="term" value="F:DNA binding"/>
    <property type="evidence" value="ECO:0007669"/>
    <property type="project" value="InterPro"/>
</dbReference>
<dbReference type="GO" id="GO:0003899">
    <property type="term" value="F:DNA-directed RNA polymerase activity"/>
    <property type="evidence" value="ECO:0000250"/>
    <property type="project" value="GeneDB"/>
</dbReference>
<dbReference type="GO" id="GO:0046983">
    <property type="term" value="F:protein dimerization activity"/>
    <property type="evidence" value="ECO:0007669"/>
    <property type="project" value="InterPro"/>
</dbReference>
<dbReference type="GO" id="GO:0006366">
    <property type="term" value="P:transcription by RNA polymerase II"/>
    <property type="evidence" value="ECO:0000250"/>
    <property type="project" value="GeneDB"/>
</dbReference>
<dbReference type="CDD" id="cd06926">
    <property type="entry name" value="RNAP_II_RPB11"/>
    <property type="match status" value="1"/>
</dbReference>
<dbReference type="Gene3D" id="3.30.1360.10">
    <property type="entry name" value="RNA polymerase, RBP11-like subunit"/>
    <property type="match status" value="1"/>
</dbReference>
<dbReference type="HAMAP" id="MF_00261">
    <property type="entry name" value="RNApol_arch_Rpo11"/>
    <property type="match status" value="1"/>
</dbReference>
<dbReference type="InterPro" id="IPR037685">
    <property type="entry name" value="RBP11"/>
</dbReference>
<dbReference type="InterPro" id="IPR036603">
    <property type="entry name" value="RBP11-like"/>
</dbReference>
<dbReference type="InterPro" id="IPR009025">
    <property type="entry name" value="RBP11-like_dimer"/>
</dbReference>
<dbReference type="InterPro" id="IPR008193">
    <property type="entry name" value="RNA_pol_Rpb11_13-16kDa_CS"/>
</dbReference>
<dbReference type="InterPro" id="IPR022905">
    <property type="entry name" value="Rpo11-like"/>
</dbReference>
<dbReference type="PANTHER" id="PTHR13946">
    <property type="entry name" value="DNA-DIRECTED RNA POLYMERASE I,II,III"/>
    <property type="match status" value="1"/>
</dbReference>
<dbReference type="PANTHER" id="PTHR13946:SF16">
    <property type="entry name" value="DNA-DIRECTED RNA POLYMERASE II SUBUNIT RPB11"/>
    <property type="match status" value="1"/>
</dbReference>
<dbReference type="Pfam" id="PF13656">
    <property type="entry name" value="RNA_pol_L_2"/>
    <property type="match status" value="1"/>
</dbReference>
<dbReference type="SUPFAM" id="SSF55257">
    <property type="entry name" value="RBP11-like subunits of RNA polymerase"/>
    <property type="match status" value="1"/>
</dbReference>
<dbReference type="PROSITE" id="PS01154">
    <property type="entry name" value="RNA_POL_L_13KD"/>
    <property type="match status" value="1"/>
</dbReference>
<organism>
    <name type="scientific">Plasmodium falciparum (isolate 3D7)</name>
    <dbReference type="NCBI Taxonomy" id="36329"/>
    <lineage>
        <taxon>Eukaryota</taxon>
        <taxon>Sar</taxon>
        <taxon>Alveolata</taxon>
        <taxon>Apicomplexa</taxon>
        <taxon>Aconoidasida</taxon>
        <taxon>Haemosporida</taxon>
        <taxon>Plasmodiidae</taxon>
        <taxon>Plasmodium</taxon>
        <taxon>Plasmodium (Laverania)</taxon>
    </lineage>
</organism>
<keyword id="KW-0240">DNA-directed RNA polymerase</keyword>
<keyword id="KW-0539">Nucleus</keyword>
<keyword id="KW-1185">Reference proteome</keyword>
<keyword id="KW-0804">Transcription</keyword>
<comment type="function">
    <text evidence="1">DNA-dependent RNA polymerase catalyzes the transcription of DNA into RNA using the four ribonucleoside triphosphates as substrates. Component of RNA polymerase II which synthesizes mRNA precursors and many functional non-coding RNAs. Pol II is the central component of the basal RNA polymerase II transcription machinery. It is composed of mobile elements that move relative to each other. RPB11 is part of the core element with the central large cleft (By similarity).</text>
</comment>
<comment type="subunit">
    <text evidence="1">Component of the RNA polymerase II (Pol II) complex consisting of 12 subunits.</text>
</comment>
<comment type="subcellular location">
    <subcellularLocation>
        <location evidence="1">Nucleus</location>
    </subcellularLocation>
</comment>
<comment type="similarity">
    <text evidence="2">Belongs to the archaeal Rpo11/eukaryotic RPB11/RPC19 RNA polymerase subunit family.</text>
</comment>
<feature type="chain" id="PRO_0000232464" description="Probable DNA-directed RNA polymerase II subunit RPB11">
    <location>
        <begin position="1"/>
        <end position="126"/>
    </location>
</feature>
<sequence length="126" mass="14125">MSVPTLSNKPETVDLLVLAPGEKKVTCTISDKGDCNIFVIKLEDHTIGNLIKIQLCQDPKVLFAAYRQPHPLQNAIEITIKPKGYAGVKLLSDNVNNILSQVATLKENFAKKIQKYKESNSYYEDY</sequence>
<reference key="1">
    <citation type="journal article" date="2002" name="Nature">
        <title>Genome sequence of the human malaria parasite Plasmodium falciparum.</title>
        <authorList>
            <person name="Gardner M.J."/>
            <person name="Hall N."/>
            <person name="Fung E."/>
            <person name="White O."/>
            <person name="Berriman M."/>
            <person name="Hyman R.W."/>
            <person name="Carlton J.M."/>
            <person name="Pain A."/>
            <person name="Nelson K.E."/>
            <person name="Bowman S."/>
            <person name="Paulsen I.T."/>
            <person name="James K.D."/>
            <person name="Eisen J.A."/>
            <person name="Rutherford K.M."/>
            <person name="Salzberg S.L."/>
            <person name="Craig A."/>
            <person name="Kyes S."/>
            <person name="Chan M.-S."/>
            <person name="Nene V."/>
            <person name="Shallom S.J."/>
            <person name="Suh B."/>
            <person name="Peterson J."/>
            <person name="Angiuoli S."/>
            <person name="Pertea M."/>
            <person name="Allen J."/>
            <person name="Selengut J."/>
            <person name="Haft D."/>
            <person name="Mather M.W."/>
            <person name="Vaidya A.B."/>
            <person name="Martin D.M.A."/>
            <person name="Fairlamb A.H."/>
            <person name="Fraunholz M.J."/>
            <person name="Roos D.S."/>
            <person name="Ralph S.A."/>
            <person name="McFadden G.I."/>
            <person name="Cummings L.M."/>
            <person name="Subramanian G.M."/>
            <person name="Mungall C."/>
            <person name="Venter J.C."/>
            <person name="Carucci D.J."/>
            <person name="Hoffman S.L."/>
            <person name="Newbold C."/>
            <person name="Davis R.W."/>
            <person name="Fraser C.M."/>
            <person name="Barrell B.G."/>
        </authorList>
    </citation>
    <scope>NUCLEOTIDE SEQUENCE [LARGE SCALE GENOMIC DNA]</scope>
    <source>
        <strain>3D7</strain>
    </source>
</reference>
<reference key="2">
    <citation type="journal article" date="2002" name="Nature">
        <title>Sequence of Plasmodium falciparum chromosomes 1, 3-9 and 13.</title>
        <authorList>
            <person name="Hall N."/>
            <person name="Pain A."/>
            <person name="Berriman M."/>
            <person name="Churcher C.M."/>
            <person name="Harris B."/>
            <person name="Harris D."/>
            <person name="Mungall K.L."/>
            <person name="Bowman S."/>
            <person name="Atkin R."/>
            <person name="Baker S."/>
            <person name="Barron A."/>
            <person name="Brooks K."/>
            <person name="Buckee C.O."/>
            <person name="Burrows C."/>
            <person name="Cherevach I."/>
            <person name="Chillingworth C."/>
            <person name="Chillingworth T."/>
            <person name="Christodoulou Z."/>
            <person name="Clark L."/>
            <person name="Clark R."/>
            <person name="Corton C."/>
            <person name="Cronin A."/>
            <person name="Davies R.M."/>
            <person name="Davis P."/>
            <person name="Dear P."/>
            <person name="Dearden F."/>
            <person name="Doggett J."/>
            <person name="Feltwell T."/>
            <person name="Goble A."/>
            <person name="Goodhead I."/>
            <person name="Gwilliam R."/>
            <person name="Hamlin N."/>
            <person name="Hance Z."/>
            <person name="Harper D."/>
            <person name="Hauser H."/>
            <person name="Hornsby T."/>
            <person name="Holroyd S."/>
            <person name="Horrocks P."/>
            <person name="Humphray S."/>
            <person name="Jagels K."/>
            <person name="James K.D."/>
            <person name="Johnson D."/>
            <person name="Kerhornou A."/>
            <person name="Knights A."/>
            <person name="Konfortov B."/>
            <person name="Kyes S."/>
            <person name="Larke N."/>
            <person name="Lawson D."/>
            <person name="Lennard N."/>
            <person name="Line A."/>
            <person name="Maddison M."/>
            <person name="Mclean J."/>
            <person name="Mooney P."/>
            <person name="Moule S."/>
            <person name="Murphy L."/>
            <person name="Oliver K."/>
            <person name="Ormond D."/>
            <person name="Price C."/>
            <person name="Quail M.A."/>
            <person name="Rabbinowitsch E."/>
            <person name="Rajandream M.A."/>
            <person name="Rutter S."/>
            <person name="Rutherford K.M."/>
            <person name="Sanders M."/>
            <person name="Simmonds M."/>
            <person name="Seeger K."/>
            <person name="Sharp S."/>
            <person name="Smith R."/>
            <person name="Squares R."/>
            <person name="Squares S."/>
            <person name="Stevens K."/>
            <person name="Taylor K."/>
            <person name="Tivey A."/>
            <person name="Unwin L."/>
            <person name="Whitehead S."/>
            <person name="Woodward J.R."/>
            <person name="Sulston J.E."/>
            <person name="Craig A."/>
            <person name="Newbold C."/>
            <person name="Barrell B.G."/>
        </authorList>
    </citation>
    <scope>NUCLEOTIDE SEQUENCE [LARGE SCALE GENOMIC DNA]</scope>
    <source>
        <strain>3D7</strain>
    </source>
</reference>
<protein>
    <recommendedName>
        <fullName>Probable DNA-directed RNA polymerase II subunit RPB11</fullName>
        <shortName>RNA polymerase II subunit B11</shortName>
    </recommendedName>
    <alternativeName>
        <fullName>DNA-directed RNA polymerase II subunit J</fullName>
    </alternativeName>
</protein>
<proteinExistence type="inferred from homology"/>
<gene>
    <name type="ORF">PF13_0023</name>
</gene>
<name>RPB11_PLAF7</name>